<sequence>MSDDWDDEPIVDTRGARGGDWSDDEDTAKSFSGEAEGDGVGGSGGEGGGYQGGNRDVFGRIGGGRGGGAGGYRGGNRDGGGFHGGRREGERDFRGGEGGFRGGQGGSRGGQGGSRGGQGGFRGGEGGFRGRLYENEDGDERRGRLDREERGGERRGRLDREERGGERGERGDGGFARRRRNEDDINNNNNIVEDVERKREFYIPPEPSNDAIEIFSSGIASGIHFSKYNNIPVKVTGSDVPQPIQHFTSADLRDIIIDNVNKSGYKIPTPIQKCSIPVISSGRDLMACAQTGSGKTAAFLLPILSKLLEDPHELELGRPQVVIVSPTRELAIQIFNEARKFAFESYLKIGIVYGGTSFRHQNECITRGCHVVIATPGRLLDFVDRTFITFEDTRFVVLDEADRMLDMGFSEDMRRIMTHVTMRPEHQTLMFSATFPEEIQRMAGEFLKNYVFVAIGIVGGACSDVKQTIYEVNKYAKRSKLIEILSEQADGTIVFVETKRGADFLASFLSEKEFPTTSIHGDRLQSQREQALRDFKNGSMKVLIATSVASRGLDIKNIKHVINYDMPSKIDDYVHRIGRTGRVGNNGRATSFFDPEKDRAIAADLVKILEGSGQTVPDFLRTCGAGGDGGYSNQNFGGVDVRGRGNYVGDATNVEEEEQWD</sequence>
<feature type="chain" id="PRO_0000054976" description="ATP-dependent RNA helicase vasa">
    <location>
        <begin position="1"/>
        <end position="661"/>
    </location>
</feature>
<feature type="repeat" description="1">
    <location>
        <begin position="93"/>
        <end position="99"/>
    </location>
</feature>
<feature type="repeat" description="2">
    <location>
        <begin position="100"/>
        <end position="106"/>
    </location>
</feature>
<feature type="repeat" description="3">
    <location>
        <begin position="107"/>
        <end position="113"/>
    </location>
</feature>
<feature type="repeat" description="4">
    <location>
        <begin position="114"/>
        <end position="120"/>
    </location>
</feature>
<feature type="repeat" description="5">
    <location>
        <begin position="121"/>
        <end position="127"/>
    </location>
</feature>
<feature type="domain" description="Helicase ATP-binding" evidence="1">
    <location>
        <begin position="276"/>
        <end position="453"/>
    </location>
</feature>
<feature type="domain" description="Helicase C-terminal" evidence="2">
    <location>
        <begin position="477"/>
        <end position="624"/>
    </location>
</feature>
<feature type="region of interest" description="Disordered" evidence="3">
    <location>
        <begin position="1"/>
        <end position="186"/>
    </location>
</feature>
<feature type="region of interest" description="5 X 7 AA tandem repeats of [FS]-R-G-G-[EQ]-G-G">
    <location>
        <begin position="93"/>
        <end position="127"/>
    </location>
</feature>
<feature type="region of interest" description="Required for posterior localization in oocyte">
    <location>
        <begin position="184"/>
        <end position="203"/>
    </location>
</feature>
<feature type="short sequence motif" description="B30.2/SPRY domain-binding motif" evidence="14 15">
    <location>
        <begin position="184"/>
        <end position="188"/>
    </location>
</feature>
<feature type="short sequence motif" description="Q motif">
    <location>
        <begin position="245"/>
        <end position="273"/>
    </location>
</feature>
<feature type="short sequence motif" description="DEAD box">
    <location>
        <begin position="399"/>
        <end position="402"/>
    </location>
</feature>
<feature type="compositionally biased region" description="Acidic residues" evidence="3">
    <location>
        <begin position="1"/>
        <end position="10"/>
    </location>
</feature>
<feature type="compositionally biased region" description="Gly residues" evidence="3">
    <location>
        <begin position="38"/>
        <end position="52"/>
    </location>
</feature>
<feature type="compositionally biased region" description="Gly residues" evidence="3">
    <location>
        <begin position="60"/>
        <end position="83"/>
    </location>
</feature>
<feature type="compositionally biased region" description="Basic and acidic residues" evidence="3">
    <location>
        <begin position="85"/>
        <end position="95"/>
    </location>
</feature>
<feature type="compositionally biased region" description="Gly residues" evidence="3">
    <location>
        <begin position="96"/>
        <end position="129"/>
    </location>
</feature>
<feature type="compositionally biased region" description="Basic and acidic residues" evidence="3">
    <location>
        <begin position="131"/>
        <end position="172"/>
    </location>
</feature>
<feature type="binding site" evidence="1">
    <location>
        <begin position="289"/>
        <end position="296"/>
    </location>
    <ligand>
        <name>ATP</name>
        <dbReference type="ChEBI" id="CHEBI:30616"/>
    </ligand>
</feature>
<feature type="modified residue" description="Phosphoserine" evidence="12">
    <location>
        <position position="22"/>
    </location>
</feature>
<feature type="modified residue" description="Phosphothreonine" evidence="12">
    <location>
        <position position="27"/>
    </location>
</feature>
<feature type="mutagenesis site" description="Enhances protein stability. Does not affect protein distribution in the oocyte." evidence="14">
    <original>DINNN</original>
    <variation>AAAAA</variation>
    <location>
        <begin position="184"/>
        <end position="188"/>
    </location>
</feature>
<feature type="mutagenesis site" description="Decreases interaction with gus." evidence="10 14">
    <original>D</original>
    <variation>A</variation>
    <location>
        <position position="184"/>
    </location>
</feature>
<feature type="mutagenesis site" description="Decreases interaction with gus." evidence="10">
    <original>I</original>
    <variation>A</variation>
    <location>
        <position position="185"/>
    </location>
</feature>
<feature type="mutagenesis site" description="Strongly decreases interaction with gus." evidence="10">
    <original>NNNN</original>
    <variation>ANNA</variation>
    <location>
        <begin position="186"/>
        <end position="189"/>
    </location>
</feature>
<feature type="mutagenesis site" description="Abolishes interaction with gus." evidence="10">
    <original>NNN</original>
    <variation>AAA</variation>
    <location>
        <begin position="186"/>
        <end position="188"/>
    </location>
</feature>
<feature type="mutagenesis site" description="Strongly decreases interaction with gus." evidence="10 14">
    <original>N</original>
    <variation>A</variation>
    <location>
        <position position="187"/>
    </location>
</feature>
<feature type="mutagenesis site" description="Strongly decreases interaction with gus." evidence="10 14">
    <original>N</original>
    <variation>A</variation>
    <location>
        <position position="188"/>
    </location>
</feature>
<feature type="mutagenesis site" description="Does not affect interaction with gus." evidence="10 14">
    <original>N</original>
    <variation>A</variation>
    <location>
        <position position="189"/>
    </location>
</feature>
<feature type="mutagenesis site" description="Fails to bind and unwind RNA." evidence="20">
    <original>I</original>
    <variation>N</variation>
    <location>
        <position position="256"/>
    </location>
</feature>
<feature type="mutagenesis site" description="Fails to bind and unwind RNA." evidence="20">
    <original>I</original>
    <variation>M</variation>
    <location>
        <position position="271"/>
    </location>
</feature>
<feature type="mutagenesis site" description="Reduction in RNA-binding, reduced RNA-dependent ATPase and unwinding activities." evidence="8">
    <original>R</original>
    <variation>A</variation>
    <location>
        <position position="328"/>
    </location>
</feature>
<feature type="mutagenesis site" description="Increase in RNA-binding and no significant change to RNA-dependent ATPase or unwinding activities." evidence="8">
    <original>E</original>
    <variation>A</variation>
    <location>
        <position position="329"/>
    </location>
</feature>
<feature type="mutagenesis site" description="Reduction in RNA-binding, drastic reduction in unwinding activities, no significant change to RNA-dependent ATPase activity." evidence="8">
    <original>Q</original>
    <variation>A</variation>
    <location>
        <position position="333"/>
    </location>
</feature>
<feature type="mutagenesis site" description="Reduction in RNA-binding, significantly reduced RNA-dependent ATPase and unwinding activities." evidence="8">
    <original>R</original>
    <variation>A</variation>
    <location>
        <position position="378"/>
    </location>
</feature>
<feature type="mutagenesis site" description="Increase in RNA-binding." evidence="8">
    <original>D</original>
    <variation>A</variation>
    <location>
        <position position="381"/>
    </location>
</feature>
<feature type="mutagenesis site" description="Reduction in RNA-binding, abolished unwinding activities and no significant change to RNA-dependent ATPase activity." evidence="8">
    <original>Q</original>
    <variation>A</variation>
    <location>
        <position position="525"/>
    </location>
</feature>
<feature type="mutagenesis site" description="Reduction in RNA-binding, barely detectable RNA-dependent ATPase activity and completely defective unwinding activity." evidence="8">
    <original>R</original>
    <variation>A</variation>
    <location>
        <position position="528"/>
    </location>
</feature>
<feature type="mutagenesis site" description="Moderately decreased the RNA binding, abolished both the RNA-dependent ATPase and unwinding activities." evidence="8">
    <original>T</original>
    <variation>A</variation>
    <location>
        <position position="546"/>
    </location>
</feature>
<feature type="mutagenesis site" description="Reduction in RNA-binding, drastic reduction in unwinding activities and no significant change to RNA-dependent ATPase activity." evidence="8">
    <original>R</original>
    <variation>A</variation>
    <location>
        <position position="551"/>
    </location>
</feature>
<feature type="mutagenesis site" description="Fails to unwind RNA." evidence="20">
    <original>G</original>
    <variation>E</variation>
    <location>
        <position position="552"/>
    </location>
</feature>
<feature type="mutagenesis site" description="No change to RNA-binding, abolished unwinding activities and no significant change to RNA-dependent ATPase activity." evidence="8">
    <original>D</original>
    <variation>A</variation>
    <location>
        <position position="554"/>
    </location>
</feature>
<feature type="sequence conflict" description="In Ref. 3; AAA29013." evidence="24" ref="3">
    <original>A</original>
    <variation>R</variation>
    <location>
        <position position="35"/>
    </location>
</feature>
<feature type="sequence conflict" description="In Ref. 3; AAA29013." evidence="24" ref="3">
    <location>
        <begin position="153"/>
        <end position="165"/>
    </location>
</feature>
<feature type="sequence conflict" description="In Ref. 1; CAA31405 and 3; AAA29013." evidence="24" ref="1 3">
    <original>V</original>
    <variation>A</variation>
    <location>
        <position position="192"/>
    </location>
</feature>
<feature type="sequence conflict" description="In Ref. 1; CAA31405." evidence="24" ref="1">
    <original>Y</original>
    <variation>F</variation>
    <location>
        <position position="265"/>
    </location>
</feature>
<feature type="sequence conflict" description="In Ref. 3; AAA29013." evidence="24" ref="3">
    <original>V</original>
    <variation>C</variation>
    <location>
        <position position="322"/>
    </location>
</feature>
<feature type="sequence conflict" description="In Ref. 1; CAA31405." evidence="24" ref="1">
    <original>F</original>
    <variation>S</variation>
    <location>
        <position position="452"/>
    </location>
</feature>
<feature type="sequence conflict" description="In Ref. 1; CAA31405." evidence="24" ref="1">
    <original>R</original>
    <variation>C</variation>
    <location>
        <position position="582"/>
    </location>
</feature>
<feature type="sequence conflict" description="In Ref. 3; AAA29013." evidence="24" ref="3">
    <original>D</original>
    <variation>H</variation>
    <location>
        <position position="594"/>
    </location>
</feature>
<feature type="strand" evidence="29">
    <location>
        <begin position="189"/>
        <end position="192"/>
    </location>
</feature>
<feature type="helix" evidence="29">
    <location>
        <begin position="195"/>
        <end position="199"/>
    </location>
</feature>
<feature type="helix" evidence="28">
    <location>
        <begin position="211"/>
        <end position="214"/>
    </location>
</feature>
<feature type="helix" evidence="28">
    <location>
        <begin position="225"/>
        <end position="230"/>
    </location>
</feature>
<feature type="strand" evidence="28">
    <location>
        <begin position="233"/>
        <end position="239"/>
    </location>
</feature>
<feature type="helix" evidence="28">
    <location>
        <begin position="247"/>
        <end position="249"/>
    </location>
</feature>
<feature type="helix" evidence="28">
    <location>
        <begin position="254"/>
        <end position="262"/>
    </location>
</feature>
<feature type="helix" evidence="28">
    <location>
        <begin position="270"/>
        <end position="280"/>
    </location>
</feature>
<feature type="strand" evidence="28">
    <location>
        <begin position="285"/>
        <end position="288"/>
    </location>
</feature>
<feature type="helix" evidence="28">
    <location>
        <begin position="295"/>
        <end position="309"/>
    </location>
</feature>
<feature type="strand" evidence="28">
    <location>
        <begin position="320"/>
        <end position="324"/>
    </location>
</feature>
<feature type="helix" evidence="28">
    <location>
        <begin position="328"/>
        <end position="341"/>
    </location>
</feature>
<feature type="turn" evidence="28">
    <location>
        <begin position="342"/>
        <end position="344"/>
    </location>
</feature>
<feature type="helix" evidence="28">
    <location>
        <begin position="358"/>
        <end position="365"/>
    </location>
</feature>
<feature type="strand" evidence="28">
    <location>
        <begin position="370"/>
        <end position="374"/>
    </location>
</feature>
<feature type="helix" evidence="28">
    <location>
        <begin position="376"/>
        <end position="384"/>
    </location>
</feature>
<feature type="strand" evidence="28">
    <location>
        <begin position="395"/>
        <end position="399"/>
    </location>
</feature>
<feature type="helix" evidence="28">
    <location>
        <begin position="401"/>
        <end position="404"/>
    </location>
</feature>
<feature type="turn" evidence="28">
    <location>
        <begin position="407"/>
        <end position="409"/>
    </location>
</feature>
<feature type="helix" evidence="28">
    <location>
        <begin position="410"/>
        <end position="418"/>
    </location>
</feature>
<feature type="strand" evidence="28">
    <location>
        <begin position="427"/>
        <end position="433"/>
    </location>
</feature>
<feature type="helix" evidence="28">
    <location>
        <begin position="437"/>
        <end position="444"/>
    </location>
</feature>
<feature type="strand" evidence="28">
    <location>
        <begin position="451"/>
        <end position="457"/>
    </location>
</feature>
<feature type="strand" evidence="30">
    <location>
        <begin position="466"/>
        <end position="471"/>
    </location>
</feature>
<feature type="helix" evidence="30">
    <location>
        <begin position="474"/>
        <end position="476"/>
    </location>
</feature>
<feature type="helix" evidence="30">
    <location>
        <begin position="477"/>
        <end position="487"/>
    </location>
</feature>
<feature type="strand" evidence="30">
    <location>
        <begin position="492"/>
        <end position="497"/>
    </location>
</feature>
<feature type="helix" evidence="30">
    <location>
        <begin position="499"/>
        <end position="511"/>
    </location>
</feature>
<feature type="strand" evidence="30">
    <location>
        <begin position="516"/>
        <end position="519"/>
    </location>
</feature>
<feature type="helix" evidence="30">
    <location>
        <begin position="525"/>
        <end position="536"/>
    </location>
</feature>
<feature type="strand" evidence="30">
    <location>
        <begin position="541"/>
        <end position="546"/>
    </location>
</feature>
<feature type="helix" evidence="30">
    <location>
        <begin position="547"/>
        <end position="550"/>
    </location>
</feature>
<feature type="strand" evidence="30">
    <location>
        <begin position="559"/>
        <end position="565"/>
    </location>
</feature>
<feature type="helix" evidence="30">
    <location>
        <begin position="570"/>
        <end position="577"/>
    </location>
</feature>
<feature type="strand" evidence="30">
    <location>
        <begin position="588"/>
        <end position="593"/>
    </location>
</feature>
<feature type="turn" evidence="30">
    <location>
        <begin position="595"/>
        <end position="597"/>
    </location>
</feature>
<feature type="helix" evidence="30">
    <location>
        <begin position="599"/>
        <end position="601"/>
    </location>
</feature>
<feature type="helix" evidence="30">
    <location>
        <begin position="602"/>
        <end position="611"/>
    </location>
</feature>
<feature type="helix" evidence="30">
    <location>
        <begin position="618"/>
        <end position="620"/>
    </location>
</feature>
<reference key="1">
    <citation type="journal article" date="1988" name="Nature">
        <title>The product of the Drosophila gene vasa is very similar to eukaryotic initiation factor-4A.</title>
        <authorList>
            <person name="Lasko P.F."/>
            <person name="Ashburner M."/>
        </authorList>
    </citation>
    <scope>NUCLEOTIDE SEQUENCE [GENOMIC DNA]</scope>
    <scope>FUNCTION</scope>
    <scope>TISSUE SPECIFICITY</scope>
    <scope>DEVELOPMENTAL STAGE</scope>
    <scope>DISRUPTION PHENOTYPE</scope>
</reference>
<reference key="2">
    <citation type="submission" date="1993-12" db="EMBL/GenBank/DDBJ databases">
        <authorList>
            <person name="Lasko P.F."/>
        </authorList>
    </citation>
    <scope>SEQUENCE REVISION</scope>
</reference>
<reference key="3">
    <citation type="journal article" date="1988" name="Cell">
        <title>A protein component of Drosophila polar granules is encoded by vasa and has extensive sequence similarity to ATP-dependent helicases.</title>
        <authorList>
            <person name="Hay B."/>
            <person name="Jan L.Y."/>
            <person name="Jan Y.N."/>
        </authorList>
    </citation>
    <scope>NUCLEOTIDE SEQUENCE [MRNA]</scope>
    <scope>FUNCTION</scope>
    <scope>SUBCELLULAR LOCATION</scope>
    <scope>TISSUE SPECIFICITY</scope>
    <scope>DEVELOPMENTAL STAGE</scope>
</reference>
<reference key="4">
    <citation type="journal article" date="1999" name="Genetics">
        <title>An exploration of the sequence of a 2.9-Mb region of the genome of Drosophila melanogaster: the Adh region.</title>
        <authorList>
            <person name="Ashburner M."/>
            <person name="Misra S."/>
            <person name="Roote J."/>
            <person name="Lewis S.E."/>
            <person name="Blazej R.G."/>
            <person name="Davis T."/>
            <person name="Doyle C."/>
            <person name="Galle R.F."/>
            <person name="George R.A."/>
            <person name="Harris N.L."/>
            <person name="Hartzell G."/>
            <person name="Harvey D.A."/>
            <person name="Hong L."/>
            <person name="Houston K.A."/>
            <person name="Hoskins R.A."/>
            <person name="Johnson G."/>
            <person name="Martin C."/>
            <person name="Moshrefi A.R."/>
            <person name="Palazzolo M."/>
            <person name="Reese M.G."/>
            <person name="Spradling A.C."/>
            <person name="Tsang G."/>
            <person name="Wan K.H."/>
            <person name="Whitelaw K."/>
            <person name="Celniker S.E."/>
            <person name="Rubin G.M."/>
        </authorList>
    </citation>
    <scope>NUCLEOTIDE SEQUENCE [LARGE SCALE GENOMIC DNA]</scope>
    <source>
        <strain>Berkeley</strain>
    </source>
</reference>
<reference key="5">
    <citation type="journal article" date="2000" name="Science">
        <title>The genome sequence of Drosophila melanogaster.</title>
        <authorList>
            <person name="Adams M.D."/>
            <person name="Celniker S.E."/>
            <person name="Holt R.A."/>
            <person name="Evans C.A."/>
            <person name="Gocayne J.D."/>
            <person name="Amanatides P.G."/>
            <person name="Scherer S.E."/>
            <person name="Li P.W."/>
            <person name="Hoskins R.A."/>
            <person name="Galle R.F."/>
            <person name="George R.A."/>
            <person name="Lewis S.E."/>
            <person name="Richards S."/>
            <person name="Ashburner M."/>
            <person name="Henderson S.N."/>
            <person name="Sutton G.G."/>
            <person name="Wortman J.R."/>
            <person name="Yandell M.D."/>
            <person name="Zhang Q."/>
            <person name="Chen L.X."/>
            <person name="Brandon R.C."/>
            <person name="Rogers Y.-H.C."/>
            <person name="Blazej R.G."/>
            <person name="Champe M."/>
            <person name="Pfeiffer B.D."/>
            <person name="Wan K.H."/>
            <person name="Doyle C."/>
            <person name="Baxter E.G."/>
            <person name="Helt G."/>
            <person name="Nelson C.R."/>
            <person name="Miklos G.L.G."/>
            <person name="Abril J.F."/>
            <person name="Agbayani A."/>
            <person name="An H.-J."/>
            <person name="Andrews-Pfannkoch C."/>
            <person name="Baldwin D."/>
            <person name="Ballew R.M."/>
            <person name="Basu A."/>
            <person name="Baxendale J."/>
            <person name="Bayraktaroglu L."/>
            <person name="Beasley E.M."/>
            <person name="Beeson K.Y."/>
            <person name="Benos P.V."/>
            <person name="Berman B.P."/>
            <person name="Bhandari D."/>
            <person name="Bolshakov S."/>
            <person name="Borkova D."/>
            <person name="Botchan M.R."/>
            <person name="Bouck J."/>
            <person name="Brokstein P."/>
            <person name="Brottier P."/>
            <person name="Burtis K.C."/>
            <person name="Busam D.A."/>
            <person name="Butler H."/>
            <person name="Cadieu E."/>
            <person name="Center A."/>
            <person name="Chandra I."/>
            <person name="Cherry J.M."/>
            <person name="Cawley S."/>
            <person name="Dahlke C."/>
            <person name="Davenport L.B."/>
            <person name="Davies P."/>
            <person name="de Pablos B."/>
            <person name="Delcher A."/>
            <person name="Deng Z."/>
            <person name="Mays A.D."/>
            <person name="Dew I."/>
            <person name="Dietz S.M."/>
            <person name="Dodson K."/>
            <person name="Doup L.E."/>
            <person name="Downes M."/>
            <person name="Dugan-Rocha S."/>
            <person name="Dunkov B.C."/>
            <person name="Dunn P."/>
            <person name="Durbin K.J."/>
            <person name="Evangelista C.C."/>
            <person name="Ferraz C."/>
            <person name="Ferriera S."/>
            <person name="Fleischmann W."/>
            <person name="Fosler C."/>
            <person name="Gabrielian A.E."/>
            <person name="Garg N.S."/>
            <person name="Gelbart W.M."/>
            <person name="Glasser K."/>
            <person name="Glodek A."/>
            <person name="Gong F."/>
            <person name="Gorrell J.H."/>
            <person name="Gu Z."/>
            <person name="Guan P."/>
            <person name="Harris M."/>
            <person name="Harris N.L."/>
            <person name="Harvey D.A."/>
            <person name="Heiman T.J."/>
            <person name="Hernandez J.R."/>
            <person name="Houck J."/>
            <person name="Hostin D."/>
            <person name="Houston K.A."/>
            <person name="Howland T.J."/>
            <person name="Wei M.-H."/>
            <person name="Ibegwam C."/>
            <person name="Jalali M."/>
            <person name="Kalush F."/>
            <person name="Karpen G.H."/>
            <person name="Ke Z."/>
            <person name="Kennison J.A."/>
            <person name="Ketchum K.A."/>
            <person name="Kimmel B.E."/>
            <person name="Kodira C.D."/>
            <person name="Kraft C.L."/>
            <person name="Kravitz S."/>
            <person name="Kulp D."/>
            <person name="Lai Z."/>
            <person name="Lasko P."/>
            <person name="Lei Y."/>
            <person name="Levitsky A.A."/>
            <person name="Li J.H."/>
            <person name="Li Z."/>
            <person name="Liang Y."/>
            <person name="Lin X."/>
            <person name="Liu X."/>
            <person name="Mattei B."/>
            <person name="McIntosh T.C."/>
            <person name="McLeod M.P."/>
            <person name="McPherson D."/>
            <person name="Merkulov G."/>
            <person name="Milshina N.V."/>
            <person name="Mobarry C."/>
            <person name="Morris J."/>
            <person name="Moshrefi A."/>
            <person name="Mount S.M."/>
            <person name="Moy M."/>
            <person name="Murphy B."/>
            <person name="Murphy L."/>
            <person name="Muzny D.M."/>
            <person name="Nelson D.L."/>
            <person name="Nelson D.R."/>
            <person name="Nelson K.A."/>
            <person name="Nixon K."/>
            <person name="Nusskern D.R."/>
            <person name="Pacleb J.M."/>
            <person name="Palazzolo M."/>
            <person name="Pittman G.S."/>
            <person name="Pan S."/>
            <person name="Pollard J."/>
            <person name="Puri V."/>
            <person name="Reese M.G."/>
            <person name="Reinert K."/>
            <person name="Remington K."/>
            <person name="Saunders R.D.C."/>
            <person name="Scheeler F."/>
            <person name="Shen H."/>
            <person name="Shue B.C."/>
            <person name="Siden-Kiamos I."/>
            <person name="Simpson M."/>
            <person name="Skupski M.P."/>
            <person name="Smith T.J."/>
            <person name="Spier E."/>
            <person name="Spradling A.C."/>
            <person name="Stapleton M."/>
            <person name="Strong R."/>
            <person name="Sun E."/>
            <person name="Svirskas R."/>
            <person name="Tector C."/>
            <person name="Turner R."/>
            <person name="Venter E."/>
            <person name="Wang A.H."/>
            <person name="Wang X."/>
            <person name="Wang Z.-Y."/>
            <person name="Wassarman D.A."/>
            <person name="Weinstock G.M."/>
            <person name="Weissenbach J."/>
            <person name="Williams S.M."/>
            <person name="Woodage T."/>
            <person name="Worley K.C."/>
            <person name="Wu D."/>
            <person name="Yang S."/>
            <person name="Yao Q.A."/>
            <person name="Ye J."/>
            <person name="Yeh R.-F."/>
            <person name="Zaveri J.S."/>
            <person name="Zhan M."/>
            <person name="Zhang G."/>
            <person name="Zhao Q."/>
            <person name="Zheng L."/>
            <person name="Zheng X.H."/>
            <person name="Zhong F.N."/>
            <person name="Zhong W."/>
            <person name="Zhou X."/>
            <person name="Zhu S.C."/>
            <person name="Zhu X."/>
            <person name="Smith H.O."/>
            <person name="Gibbs R.A."/>
            <person name="Myers E.W."/>
            <person name="Rubin G.M."/>
            <person name="Venter J.C."/>
        </authorList>
    </citation>
    <scope>NUCLEOTIDE SEQUENCE [LARGE SCALE GENOMIC DNA]</scope>
    <source>
        <strain>Berkeley</strain>
    </source>
</reference>
<reference key="6">
    <citation type="journal article" date="2002" name="Genome Biol.">
        <title>Annotation of the Drosophila melanogaster euchromatic genome: a systematic review.</title>
        <authorList>
            <person name="Misra S."/>
            <person name="Crosby M.A."/>
            <person name="Mungall C.J."/>
            <person name="Matthews B.B."/>
            <person name="Campbell K.S."/>
            <person name="Hradecky P."/>
            <person name="Huang Y."/>
            <person name="Kaminker J.S."/>
            <person name="Millburn G.H."/>
            <person name="Prochnik S.E."/>
            <person name="Smith C.D."/>
            <person name="Tupy J.L."/>
            <person name="Whitfield E.J."/>
            <person name="Bayraktaroglu L."/>
            <person name="Berman B.P."/>
            <person name="Bettencourt B.R."/>
            <person name="Celniker S.E."/>
            <person name="de Grey A.D.N.J."/>
            <person name="Drysdale R.A."/>
            <person name="Harris N.L."/>
            <person name="Richter J."/>
            <person name="Russo S."/>
            <person name="Schroeder A.J."/>
            <person name="Shu S.Q."/>
            <person name="Stapleton M."/>
            <person name="Yamada C."/>
            <person name="Ashburner M."/>
            <person name="Gelbart W.M."/>
            <person name="Rubin G.M."/>
            <person name="Lewis S.E."/>
        </authorList>
    </citation>
    <scope>GENOME REANNOTATION</scope>
    <scope>ALTERNATIVE SPLICING</scope>
    <source>
        <strain>Berkeley</strain>
    </source>
</reference>
<reference key="7">
    <citation type="journal article" date="2002" name="Genome Biol.">
        <title>A Drosophila full-length cDNA resource.</title>
        <authorList>
            <person name="Stapleton M."/>
            <person name="Carlson J.W."/>
            <person name="Brokstein P."/>
            <person name="Yu C."/>
            <person name="Champe M."/>
            <person name="George R.A."/>
            <person name="Guarin H."/>
            <person name="Kronmiller B."/>
            <person name="Pacleb J.M."/>
            <person name="Park S."/>
            <person name="Wan K.H."/>
            <person name="Rubin G.M."/>
            <person name="Celniker S.E."/>
        </authorList>
    </citation>
    <scope>NUCLEOTIDE SEQUENCE [LARGE SCALE MRNA]</scope>
    <source>
        <strain>Berkeley</strain>
        <tissue>Embryo</tissue>
    </source>
</reference>
<reference key="8">
    <citation type="journal article" date="1994" name="Development">
        <title>Localization of vasa protein to the Drosophila pole plasm is independent of its RNA-binding and helicase activities.</title>
        <authorList>
            <person name="Liang L."/>
            <person name="Diehl-Jones W."/>
            <person name="Lasko P."/>
        </authorList>
    </citation>
    <scope>FUNCTION</scope>
    <scope>CATALYTIC ACTIVITY</scope>
    <scope>COFACTOR</scope>
    <scope>SUBCELLULAR LOCATION</scope>
    <scope>MUTAGENESIS OF ILE-256; ILE-271 AND GLY-552</scope>
</reference>
<reference key="9">
    <citation type="journal article" date="1998" name="Development">
        <title>vasa is required for GURKEN accumulation in the oocyte, and is involved in oocyte differentiation and germline cyst development.</title>
        <authorList>
            <person name="Styhler S."/>
            <person name="Nakamura A."/>
            <person name="Swan A."/>
            <person name="Suter B."/>
            <person name="Lasko P."/>
        </authorList>
    </citation>
    <scope>FUNCTION</scope>
    <scope>TISSUE SPECIFICITY</scope>
    <scope>DISRUPTION PHENOTYPE</scope>
</reference>
<reference key="10">
    <citation type="journal article" date="2000" name="Mol. Cell">
        <title>VASA mediates translation through interaction with a Drosophila yIF2 homolog.</title>
        <authorList>
            <person name="Carrera P."/>
            <person name="Johnstone O."/>
            <person name="Nakamura A."/>
            <person name="Casanova J."/>
            <person name="Jackle H."/>
            <person name="Lasko P."/>
        </authorList>
    </citation>
    <scope>FUNCTION</scope>
    <scope>INTERACTION WITH EIF5B</scope>
    <scope>DISRUPTION PHENOTYPE</scope>
</reference>
<reference key="11">
    <citation type="journal article" date="2001" name="Development">
        <title>Aubergine encodes a Drosophila polar granule component required for pole cell formation and related to eIF2C.</title>
        <authorList>
            <person name="Harris A.N."/>
            <person name="Macdonald P.M."/>
        </authorList>
    </citation>
    <scope>FUNCTION</scope>
</reference>
<reference key="12">
    <citation type="journal article" date="2002" name="Dev. Cell">
        <title>VASA localization requires the SPRY-domain and SOCS-box containing protein, GUSTAVUS.</title>
        <authorList>
            <person name="Styhler S."/>
            <person name="Nakamura A."/>
            <person name="Lasko P."/>
        </authorList>
    </citation>
    <scope>FUNCTION</scope>
    <scope>INTERACTION WITH GUS</scope>
    <scope>SUBCELLULAR LOCATION</scope>
    <scope>TISSUE SPECIFICITY</scope>
    <scope>DEVELOPMENTAL STAGE</scope>
</reference>
<reference key="13">
    <citation type="journal article" date="2003" name="Curr. Biol.">
        <title>Fat facets interacts with vasa in the Drosophila pole plasm and protects it from degradation.</title>
        <authorList>
            <person name="Liu N."/>
            <person name="Dansereau D.A."/>
            <person name="Lasko P."/>
        </authorList>
    </citation>
    <scope>FUNCTION</scope>
    <scope>INTERACTION WITH FAF</scope>
    <scope>SUBCELLULAR LOCATION</scope>
    <scope>TISSUE SPECIFICITY</scope>
    <scope>UBIQUITINATION</scope>
</reference>
<reference key="14">
    <citation type="journal article" date="2006" name="Curr. Biol.">
        <title>The role of PIWI and the miRNA machinery in Drosophila germline determination.</title>
        <authorList>
            <person name="Megosh H.B."/>
            <person name="Cox D.N."/>
            <person name="Campbell C."/>
            <person name="Lin H."/>
        </authorList>
    </citation>
    <scope>INTERACTION WITH PIWI; DCR-1 AND FMR1</scope>
    <scope>SUBCELLULAR LOCATION</scope>
</reference>
<reference key="15">
    <citation type="journal article" date="2007" name="Proc. Natl. Acad. Sci. U.S.A.">
        <title>Unique germ-line organelle, nuage, functions to repress selfish genetic elements in Drosophila melanogaster.</title>
        <authorList>
            <person name="Lim A.K."/>
            <person name="Kai T."/>
        </authorList>
    </citation>
    <scope>FUNCTION</scope>
    <scope>SUBCELLULAR LOCATION</scope>
    <scope>TISSUE SPECIFICITY</scope>
</reference>
<reference key="16">
    <citation type="journal article" date="2007" name="Proc. Natl. Acad. Sci. U.S.A.">
        <authorList>
            <person name="Lim A.K."/>
            <person name="Kai T."/>
        </authorList>
    </citation>
    <scope>ERRATUM OF PUBMED:17428915</scope>
</reference>
<reference key="17">
    <citation type="journal article" date="2008" name="J. Proteome Res.">
        <title>Phosphoproteome analysis of Drosophila melanogaster embryos.</title>
        <authorList>
            <person name="Zhai B."/>
            <person name="Villen J."/>
            <person name="Beausoleil S.A."/>
            <person name="Mintseris J."/>
            <person name="Gygi S.P."/>
        </authorList>
    </citation>
    <scope>PHOSPHORYLATION [LARGE SCALE ANALYSIS] AT SER-22 AND THR-27</scope>
    <scope>IDENTIFICATION BY MASS SPECTROMETRY</scope>
    <source>
        <tissue>Embryo</tissue>
    </source>
</reference>
<reference key="18">
    <citation type="journal article" date="2008" name="Mech. Dev.">
        <title>Isolation of new polar granule components in Drosophila reveals P body and ER associated proteins.</title>
        <authorList>
            <person name="Thomson T."/>
            <person name="Liu N."/>
            <person name="Arkov A."/>
            <person name="Lehmann R."/>
            <person name="Lasko P."/>
        </authorList>
    </citation>
    <scope>FUNCTION</scope>
    <scope>INTERACTION WITH AUB; ME31B; EIF-4A AND TER94</scope>
</reference>
<reference key="19">
    <citation type="journal article" date="2010" name="Mol. Cell. Biol.">
        <title>Regulation of Drosophila vasa in vivo through paralogous cullin-RING E3 ligase specificity receptors.</title>
        <authorList>
            <person name="Kugler J.M."/>
            <person name="Woo J.S."/>
            <person name="Oh B.H."/>
            <person name="Lasko P."/>
        </authorList>
    </citation>
    <scope>FUNCTION</scope>
    <scope>INTERACTION WITH GUS AND FSN</scope>
    <scope>SUBCELLULAR LOCATION</scope>
    <scope>MUTAGENESIS OF 184-ASP--ASN-188; ASP-184; ASN-187; ASN-188 AND ASN-189</scope>
    <scope>MOTIF</scope>
</reference>
<reference key="20">
    <citation type="journal article" date="2015" name="Mol. Cell">
        <title>Aub and Ago3 Are Recruited to Nuage through Two Mechanisms to Form a Ping-Pong Complex Assembled by Krimper.</title>
        <authorList>
            <person name="Webster A."/>
            <person name="Li S."/>
            <person name="Hur J.K."/>
            <person name="Wachsmuth M."/>
            <person name="Bois J.S."/>
            <person name="Perkins E.M."/>
            <person name="Patel D.J."/>
            <person name="Aravin A.A."/>
        </authorList>
    </citation>
    <scope>SUBCELLULAR LOCATION</scope>
</reference>
<reference key="21">
    <citation type="journal article" date="2017" name="FEBS Lett.">
        <title>An in vivo proteomic analysis of the Me31B interactome in Drosophila germ granules.</title>
        <authorList>
            <person name="DeHaan H."/>
            <person name="McCambridge A."/>
            <person name="Armstrong B."/>
            <person name="Cruse C."/>
            <person name="Solanki D."/>
            <person name="Trinidad J.C."/>
            <person name="Arkov A.L."/>
            <person name="Gao M."/>
        </authorList>
    </citation>
    <scope>SUBCELLULAR LOCATION</scope>
</reference>
<reference key="22">
    <citation type="journal article" date="2006" name="Cell">
        <title>Structural basis for RNA unwinding by the DEAD-box protein Drosophila Vasa.</title>
        <authorList>
            <person name="Sengoku T."/>
            <person name="Nureki O."/>
            <person name="Nakamura A."/>
            <person name="Kobayashi S."/>
            <person name="Yokoyama S."/>
        </authorList>
    </citation>
    <scope>X-RAY CRYSTALLOGRAPHY (2.2 ANGSTROMS) OF 200-623 IN COMPLEX WITH SSRNA AND ATP</scope>
    <scope>FUNCTION</scope>
    <scope>MUTAGENESIS OF ARG-328; GLU-329; GLN-333; ARG-378; ASP-381; GLN-525; ARG-528; THR-546; ARG-551 AND ASP-554</scope>
</reference>
<reference key="23">
    <citation type="journal article" date="2006" name="Mol. Cell">
        <title>Structural basis for protein recognition by B30.2/SPRY domains.</title>
        <authorList>
            <person name="Woo J.S."/>
            <person name="Suh H.Y."/>
            <person name="Park S.Y."/>
            <person name="Oh B.H."/>
        </authorList>
    </citation>
    <scope>X-RAY CRYSTALLOGRAPHY (2.2 ANGSTROMS) OF 184-203 IN COMPLEX WITH GUS</scope>
    <scope>MUTAGENESIS OF ASP-184; ILE-185; 186-ASN--ASN-189; 186-ASN--ASN-188; ASN-187; ASN-188 AND ASN-189</scope>
</reference>
<reference key="24">
    <citation type="submission" date="2008-12" db="PDB data bank">
        <title>Crystal structure of human spla/ryanodine receptor domain and socs box containing 1 (spsb1) in complex with a 20-residue vasa peptide.</title>
        <authorList>
            <consortium name="Structural genomics consortium (SGC)"/>
        </authorList>
    </citation>
    <scope>X-RAY CRYSTALLOGRAPHY (2.05 ANGSTROMS) OF 184-203</scope>
</reference>
<reference evidence="26 27" key="25">
    <citation type="journal article" date="2010" name="J. Mol. Biol.">
        <title>Structural basis for Par-4 recognition by the SPRY domain- and SOCS box-containing proteins SPSB1, SPSB2, and SPSB4.</title>
        <authorList>
            <person name="Filippakopoulos P."/>
            <person name="Low A."/>
            <person name="Sharpe T.D."/>
            <person name="Uppenberg J."/>
            <person name="Yao S."/>
            <person name="Kuang Z."/>
            <person name="Savitsky P."/>
            <person name="Lewis R.S."/>
            <person name="Nicholson S.E."/>
            <person name="Norton R.S."/>
            <person name="Bullock A.N."/>
        </authorList>
    </citation>
    <scope>X-RAY CRYSTALLOGRAPHY (1.80 ANGSTROMS) OF 184-203 IN COMPLEX WITH HUMAN SPSB1 AND SPSB2</scope>
    <scope>MOTIF</scope>
</reference>
<keyword id="KW-0002">3D-structure</keyword>
<keyword id="KW-0025">Alternative splicing</keyword>
<keyword id="KW-0067">ATP-binding</keyword>
<keyword id="KW-0963">Cytoplasm</keyword>
<keyword id="KW-0217">Developmental protein</keyword>
<keyword id="KW-0221">Differentiation</keyword>
<keyword id="KW-0347">Helicase</keyword>
<keyword id="KW-0378">Hydrolase</keyword>
<keyword id="KW-0460">Magnesium</keyword>
<keyword id="KW-0547">Nucleotide-binding</keyword>
<keyword id="KW-0896">Oogenesis</keyword>
<keyword id="KW-0597">Phosphoprotein</keyword>
<keyword id="KW-1185">Reference proteome</keyword>
<keyword id="KW-0677">Repeat</keyword>
<keyword id="KW-0694">RNA-binding</keyword>
<keyword id="KW-0832">Ubl conjugation</keyword>
<protein>
    <recommendedName>
        <fullName evidence="22">ATP-dependent RNA helicase vasa</fullName>
        <ecNumber evidence="20">3.6.4.13</ecNumber>
    </recommendedName>
    <alternativeName>
        <fullName>Antigen Mab46F11</fullName>
    </alternativeName>
</protein>
<evidence type="ECO:0000255" key="1">
    <source>
        <dbReference type="PROSITE-ProRule" id="PRU00541"/>
    </source>
</evidence>
<evidence type="ECO:0000255" key="2">
    <source>
        <dbReference type="PROSITE-ProRule" id="PRU00542"/>
    </source>
</evidence>
<evidence type="ECO:0000256" key="3">
    <source>
        <dbReference type="SAM" id="MobiDB-lite"/>
    </source>
</evidence>
<evidence type="ECO:0000269" key="4">
    <source>
    </source>
</evidence>
<evidence type="ECO:0000269" key="5">
    <source>
    </source>
</evidence>
<evidence type="ECO:0000269" key="6">
    <source>
    </source>
</evidence>
<evidence type="ECO:0000269" key="7">
    <source>
    </source>
</evidence>
<evidence type="ECO:0000269" key="8">
    <source>
    </source>
</evidence>
<evidence type="ECO:0000269" key="9">
    <source>
    </source>
</evidence>
<evidence type="ECO:0000269" key="10">
    <source>
    </source>
</evidence>
<evidence type="ECO:0000269" key="11">
    <source>
    </source>
</evidence>
<evidence type="ECO:0000269" key="12">
    <source>
    </source>
</evidence>
<evidence type="ECO:0000269" key="13">
    <source>
    </source>
</evidence>
<evidence type="ECO:0000269" key="14">
    <source>
    </source>
</evidence>
<evidence type="ECO:0000269" key="15">
    <source>
    </source>
</evidence>
<evidence type="ECO:0000269" key="16">
    <source>
    </source>
</evidence>
<evidence type="ECO:0000269" key="17">
    <source>
    </source>
</evidence>
<evidence type="ECO:0000269" key="18">
    <source>
    </source>
</evidence>
<evidence type="ECO:0000269" key="19">
    <source>
    </source>
</evidence>
<evidence type="ECO:0000269" key="20">
    <source>
    </source>
</evidence>
<evidence type="ECO:0000269" key="21">
    <source>
    </source>
</evidence>
<evidence type="ECO:0000303" key="22">
    <source>
    </source>
</evidence>
<evidence type="ECO:0000303" key="23">
    <source>
    </source>
</evidence>
<evidence type="ECO:0000305" key="24"/>
<evidence type="ECO:0000312" key="25">
    <source>
        <dbReference type="FlyBase" id="FBgn0283442"/>
    </source>
</evidence>
<evidence type="ECO:0007744" key="26">
    <source>
        <dbReference type="PDB" id="3EMW"/>
    </source>
</evidence>
<evidence type="ECO:0007744" key="27">
    <source>
        <dbReference type="PDB" id="3F2O"/>
    </source>
</evidence>
<evidence type="ECO:0007829" key="28">
    <source>
        <dbReference type="PDB" id="2DB3"/>
    </source>
</evidence>
<evidence type="ECO:0007829" key="29">
    <source>
        <dbReference type="PDB" id="3F2O"/>
    </source>
</evidence>
<evidence type="ECO:0007829" key="30">
    <source>
        <dbReference type="PDB" id="5NT7"/>
    </source>
</evidence>
<comment type="function">
    <text evidence="4 5 6 7 8 11 13 14 18 19 20 21">Involved in translational control mechanisms operating in early stages of oogenesis. Required maternally in many stages of oogenesis, including cystocyte differentiation, oocyte differentiation, and specification of anterior-posterior polarity in the developing cysts. Essential for the formation and/or structural integrity of perinuclear nuage particles during germ cell formation. Required for gus, Fsn and aub accumulation at the posterior pole of the embryo. Required for the localization of vas to the perinuclear region of nurse cells. May have a role in production of piwi-interacting RNA (piRNA) (PubMed:17428915).</text>
</comment>
<comment type="catalytic activity">
    <reaction evidence="20">
        <text>ATP + H2O = ADP + phosphate + H(+)</text>
        <dbReference type="Rhea" id="RHEA:13065"/>
        <dbReference type="ChEBI" id="CHEBI:15377"/>
        <dbReference type="ChEBI" id="CHEBI:15378"/>
        <dbReference type="ChEBI" id="CHEBI:30616"/>
        <dbReference type="ChEBI" id="CHEBI:43474"/>
        <dbReference type="ChEBI" id="CHEBI:456216"/>
        <dbReference type="EC" id="3.6.4.13"/>
    </reaction>
</comment>
<comment type="cofactor">
    <cofactor evidence="20">
        <name>Mg(2+)</name>
        <dbReference type="ChEBI" id="CHEBI:18420"/>
    </cofactor>
</comment>
<comment type="subunit">
    <text evidence="4 6 7 8 9 10 13 14">Interacts with eIF5B and faf. Interacts with gus (via B30.2/SPRY domain) and Fsn (via B30.2/SPRY domain). Interacts with aub, me31B, eIF-4a and TER94. Interacts with piwi; this interaction is RNA independent. Interacts with Dcr-1 and Fmr1; these interactions occur in the polar granules.</text>
</comment>
<comment type="interaction">
    <interactant intactId="EBI-134067">
        <id>P09052</id>
    </interactant>
    <interactant intactId="EBI-126933">
        <id>Q9V6L9</id>
        <label>Fsn</label>
    </interactant>
    <organismsDiffer>false</organismsDiffer>
    <experiments>2</experiments>
</comment>
<comment type="interaction">
    <interactant intactId="EBI-134067">
        <id>P09052</id>
    </interactant>
    <interactant intactId="EBI-75338">
        <id>A1Z6E0</id>
        <label>gus</label>
    </interactant>
    <organismsDiffer>false</organismsDiffer>
    <experiments>5</experiments>
</comment>
<comment type="interaction">
    <interactant intactId="EBI-134067">
        <id>P09052</id>
    </interactant>
    <interactant intactId="EBI-2659201">
        <id>Q96BD6</id>
        <label>SPSB1</label>
    </interactant>
    <organismsDiffer>true</organismsDiffer>
    <experiments>2</experiments>
</comment>
<comment type="interaction">
    <interactant intactId="EBI-134067">
        <id>P09052</id>
    </interactant>
    <interactant intactId="EBI-2323209">
        <id>Q99619</id>
        <label>SPSB2</label>
    </interactant>
    <organismsDiffer>true</organismsDiffer>
    <experiments>2</experiments>
</comment>
<comment type="subcellular location">
    <subcellularLocation>
        <location evidence="6 7 9 14 20">Cytoplasm</location>
    </subcellularLocation>
    <subcellularLocation>
        <location evidence="11 16 17">Cytoplasm</location>
        <location evidence="11 16 17">Perinuclear region</location>
    </subcellularLocation>
    <subcellularLocation>
        <location evidence="7 11 16 17 18 20">Cytoplasm</location>
        <location evidence="7 11 16 17 18 20">Cytoplasmic ribonucleoprotein granule</location>
    </subcellularLocation>
    <text evidence="7 11 16 17 18 20">Component of the perinuclear meiotic nuage (also known as germline granule or P granule), a germline-specific membraneless ribonucleoprotein biocondensate involved in post-transcriptional regulation of transposons and mRNAs (PubMed:14588248, PubMed:17428915, PubMed:26295961, PubMed:28945271, PubMed:3052853, PubMed:8026330). Localization to the nuage is dependent on spn-E (PubMed:17428915). During late stages of oogenesis seen in the pole plasm at the posterior end of the oocyte (PubMed:14588248, PubMed:17428915, PubMed:28945271, PubMed:8026330).</text>
</comment>
<comment type="alternative products">
    <event type="alternative splicing"/>
    <isoform>
        <id>P09052-1</id>
        <name evidence="25">vas</name>
        <name>A</name>
        <sequence type="displayed"/>
    </isoform>
    <isoform>
        <id>B6JUP5-1</id>
        <name>solo</name>
        <sequence type="external"/>
    </isoform>
</comment>
<comment type="tissue specificity">
    <text evidence="6 7 11 18 19 21">Abundantly expressed in the female germline (PubMed:12479811, PubMed:14588248, PubMed:17428915, PubMed:3052853, PubMed:3140040, PubMed:9521895). Gus and faf are required for vas expression in the posterior pole of the oocyte.</text>
</comment>
<comment type="developmental stage">
    <text evidence="6 18 19">Expressed both maternally and zygotically.</text>
</comment>
<comment type="domain">
    <text evidence="14 15">The B30.2/SPRY domain-binding motif mediates recognition by proteins containing a B30.2/SPRY domain.</text>
</comment>
<comment type="PTM">
    <text evidence="7">Ubiquitinated during oogenesis. Deubiquitinated by faf, which protects this protein from proteasome-mediated degradation.</text>
</comment>
<comment type="disruption phenotype">
    <text evidence="4 19 21">Defective growth of germline cysts. Fails to efficiently accumulate many localized RNAs, such as Bic-D, orb, osk and nanos (nos), but still accumulates grk RNA.</text>
</comment>
<comment type="similarity">
    <text evidence="24">Belongs to the DEAD box helicase family. DDX4/VASA subfamily.</text>
</comment>
<comment type="sequence caution" evidence="24">
    <conflict type="frameshift">
        <sequence resource="EMBL-CDS" id="AAL89864"/>
    </conflict>
</comment>
<organism>
    <name type="scientific">Drosophila melanogaster</name>
    <name type="common">Fruit fly</name>
    <dbReference type="NCBI Taxonomy" id="7227"/>
    <lineage>
        <taxon>Eukaryota</taxon>
        <taxon>Metazoa</taxon>
        <taxon>Ecdysozoa</taxon>
        <taxon>Arthropoda</taxon>
        <taxon>Hexapoda</taxon>
        <taxon>Insecta</taxon>
        <taxon>Pterygota</taxon>
        <taxon>Neoptera</taxon>
        <taxon>Endopterygota</taxon>
        <taxon>Diptera</taxon>
        <taxon>Brachycera</taxon>
        <taxon>Muscomorpha</taxon>
        <taxon>Ephydroidea</taxon>
        <taxon>Drosophilidae</taxon>
        <taxon>Drosophila</taxon>
        <taxon>Sophophora</taxon>
    </lineage>
</organism>
<accession>P09052</accession>
<accession>Q24582</accession>
<accession>Q8SXU8</accession>
<accession>Q9V3Q8</accession>
<proteinExistence type="evidence at protein level"/>
<gene>
    <name evidence="25" type="primary">vas</name>
    <name evidence="23" type="synonym">vasa</name>
    <name evidence="25" type="ORF">CG46283</name>
</gene>
<name>VASA1_DROME</name>
<dbReference type="EC" id="3.6.4.13" evidence="20"/>
<dbReference type="EMBL" id="X12945">
    <property type="protein sequence ID" value="CAA31405.1"/>
    <property type="molecule type" value="Genomic_DNA"/>
</dbReference>
<dbReference type="EMBL" id="X12946">
    <property type="protein sequence ID" value="CAA31405.1"/>
    <property type="status" value="JOINED"/>
    <property type="molecule type" value="Genomic_DNA"/>
</dbReference>
<dbReference type="EMBL" id="M23560">
    <property type="protein sequence ID" value="AAA29013.1"/>
    <property type="molecule type" value="mRNA"/>
</dbReference>
<dbReference type="EMBL" id="AE014134">
    <property type="protein sequence ID" value="AAF53438.1"/>
    <property type="molecule type" value="Genomic_DNA"/>
</dbReference>
<dbReference type="EMBL" id="AY084126">
    <property type="protein sequence ID" value="AAL89864.1"/>
    <property type="status" value="ALT_FRAME"/>
    <property type="molecule type" value="mRNA"/>
</dbReference>
<dbReference type="PIR" id="A58768">
    <property type="entry name" value="A58768"/>
</dbReference>
<dbReference type="RefSeq" id="NP_001260458.1">
    <molecule id="P09052-1"/>
    <property type="nucleotide sequence ID" value="NM_001273529.2"/>
</dbReference>
<dbReference type="RefSeq" id="NP_001303322.1">
    <molecule id="P09052-1"/>
    <property type="nucleotide sequence ID" value="NM_001316393.1"/>
</dbReference>
<dbReference type="RefSeq" id="NP_723899.1">
    <molecule id="P09052-1"/>
    <property type="nucleotide sequence ID" value="NM_165103.3"/>
</dbReference>
<dbReference type="PDB" id="2DB3">
    <property type="method" value="X-ray"/>
    <property type="resolution" value="2.20 A"/>
    <property type="chains" value="A/B/C/D=200-623"/>
</dbReference>
<dbReference type="PDB" id="2IHS">
    <property type="method" value="X-ray"/>
    <property type="resolution" value="2.20 A"/>
    <property type="chains" value="C/D=184-203"/>
</dbReference>
<dbReference type="PDB" id="3EMW">
    <property type="method" value="X-ray"/>
    <property type="resolution" value="1.80 A"/>
    <property type="chains" value="B=184-203"/>
</dbReference>
<dbReference type="PDB" id="3F2O">
    <property type="method" value="X-ray"/>
    <property type="resolution" value="2.05 A"/>
    <property type="chains" value="C/D=184-203"/>
</dbReference>
<dbReference type="PDB" id="5NT7">
    <property type="method" value="X-ray"/>
    <property type="resolution" value="1.40 A"/>
    <property type="chains" value="B/D=463-623"/>
</dbReference>
<dbReference type="PDBsum" id="2DB3"/>
<dbReference type="PDBsum" id="2IHS"/>
<dbReference type="PDBsum" id="3EMW"/>
<dbReference type="PDBsum" id="3F2O"/>
<dbReference type="PDBsum" id="5NT7"/>
<dbReference type="SMR" id="P09052"/>
<dbReference type="BioGRID" id="60902">
    <property type="interactions" value="23"/>
</dbReference>
<dbReference type="DIP" id="DIP-20604N"/>
<dbReference type="ELM" id="P09052"/>
<dbReference type="FunCoup" id="P09052">
    <property type="interactions" value="83"/>
</dbReference>
<dbReference type="IntAct" id="P09052">
    <property type="interactions" value="9"/>
</dbReference>
<dbReference type="MINT" id="P09052"/>
<dbReference type="STRING" id="7227.FBpp0401446"/>
<dbReference type="iPTMnet" id="P09052"/>
<dbReference type="EnsemblMetazoa" id="FBtr0445185">
    <molecule id="P09052-1"/>
    <property type="protein sequence ID" value="FBpp0401445"/>
    <property type="gene ID" value="FBgn0283442"/>
</dbReference>
<dbReference type="EnsemblMetazoa" id="FBtr0445186">
    <molecule id="P09052-1"/>
    <property type="protein sequence ID" value="FBpp0401446"/>
    <property type="gene ID" value="FBgn0283442"/>
</dbReference>
<dbReference type="EnsemblMetazoa" id="FBtr0445187">
    <molecule id="P09052-1"/>
    <property type="protein sequence ID" value="FBpp0401447"/>
    <property type="gene ID" value="FBgn0283442"/>
</dbReference>
<dbReference type="GeneID" id="26067080"/>
<dbReference type="KEGG" id="dme:Dmel_CG46283"/>
<dbReference type="AGR" id="FB:FBgn0283442"/>
<dbReference type="CTD" id="26067080"/>
<dbReference type="FlyBase" id="FBgn0283442">
    <property type="gene designation" value="vas"/>
</dbReference>
<dbReference type="VEuPathDB" id="VectorBase:FBgn0283442"/>
<dbReference type="GeneTree" id="ENSGT00940000157507"/>
<dbReference type="HOGENOM" id="CLU_003041_16_3_1"/>
<dbReference type="InParanoid" id="P09052"/>
<dbReference type="OMA" id="NESIMMG"/>
<dbReference type="OrthoDB" id="196131at2759"/>
<dbReference type="PhylomeDB" id="P09052"/>
<dbReference type="SignaLink" id="P09052"/>
<dbReference type="BioGRID-ORCS" id="26067080">
    <property type="hits" value="0 hits in 1 CRISPR screen"/>
</dbReference>
<dbReference type="CD-CODE" id="1DA11FFF">
    <property type="entry name" value="Germ plasm"/>
</dbReference>
<dbReference type="CD-CODE" id="D9D613FC">
    <property type="entry name" value="Synthetic Condensate 000290"/>
</dbReference>
<dbReference type="EvolutionaryTrace" id="P09052"/>
<dbReference type="GenomeRNAi" id="26067080"/>
<dbReference type="Proteomes" id="UP000000803">
    <property type="component" value="Chromosome 2L"/>
</dbReference>
<dbReference type="Bgee" id="FBgn0283442">
    <property type="expression patterns" value="Expressed in spermatogonium in testis and 34 other cell types or tissues"/>
</dbReference>
<dbReference type="ExpressionAtlas" id="P09052">
    <property type="expression patterns" value="baseline and differential"/>
</dbReference>
<dbReference type="GO" id="GO:0005737">
    <property type="term" value="C:cytoplasm"/>
    <property type="evidence" value="ECO:0000314"/>
    <property type="project" value="UniProtKB"/>
</dbReference>
<dbReference type="GO" id="GO:0043073">
    <property type="term" value="C:germ cell nucleus"/>
    <property type="evidence" value="ECO:0000314"/>
    <property type="project" value="FlyBase"/>
</dbReference>
<dbReference type="GO" id="GO:0005634">
    <property type="term" value="C:nucleus"/>
    <property type="evidence" value="ECO:0000318"/>
    <property type="project" value="GO_Central"/>
</dbReference>
<dbReference type="GO" id="GO:0043186">
    <property type="term" value="C:P granule"/>
    <property type="evidence" value="ECO:0000314"/>
    <property type="project" value="FlyBase"/>
</dbReference>
<dbReference type="GO" id="GO:0048471">
    <property type="term" value="C:perinuclear region of cytoplasm"/>
    <property type="evidence" value="ECO:0007669"/>
    <property type="project" value="UniProtKB-SubCell"/>
</dbReference>
<dbReference type="GO" id="GO:0061803">
    <property type="term" value="C:posterior cell cortex"/>
    <property type="evidence" value="ECO:0000314"/>
    <property type="project" value="FlyBase"/>
</dbReference>
<dbReference type="GO" id="GO:0005524">
    <property type="term" value="F:ATP binding"/>
    <property type="evidence" value="ECO:0007669"/>
    <property type="project" value="UniProtKB-KW"/>
</dbReference>
<dbReference type="GO" id="GO:0016887">
    <property type="term" value="F:ATP hydrolysis activity"/>
    <property type="evidence" value="ECO:0007669"/>
    <property type="project" value="RHEA"/>
</dbReference>
<dbReference type="GO" id="GO:0003729">
    <property type="term" value="F:mRNA binding"/>
    <property type="evidence" value="ECO:0000318"/>
    <property type="project" value="GO_Central"/>
</dbReference>
<dbReference type="GO" id="GO:0003724">
    <property type="term" value="F:RNA helicase activity"/>
    <property type="evidence" value="ECO:0000314"/>
    <property type="project" value="UniProtKB"/>
</dbReference>
<dbReference type="GO" id="GO:0030154">
    <property type="term" value="P:cell differentiation"/>
    <property type="evidence" value="ECO:0000318"/>
    <property type="project" value="GO_Central"/>
</dbReference>
<dbReference type="GO" id="GO:0007276">
    <property type="term" value="P:gamete generation"/>
    <property type="evidence" value="ECO:0000318"/>
    <property type="project" value="GO_Central"/>
</dbReference>
<dbReference type="GO" id="GO:0007281">
    <property type="term" value="P:germ cell development"/>
    <property type="evidence" value="ECO:0000318"/>
    <property type="project" value="GO_Central"/>
</dbReference>
<dbReference type="GO" id="GO:0048477">
    <property type="term" value="P:oogenesis"/>
    <property type="evidence" value="ECO:0007669"/>
    <property type="project" value="UniProtKB-KW"/>
</dbReference>
<dbReference type="GO" id="GO:0008104">
    <property type="term" value="P:protein localization"/>
    <property type="evidence" value="ECO:0000315"/>
    <property type="project" value="UniProtKB"/>
</dbReference>
<dbReference type="GO" id="GO:0140965">
    <property type="term" value="P:secondary piRNA processing"/>
    <property type="evidence" value="ECO:0000315"/>
    <property type="project" value="FlyBase"/>
</dbReference>
<dbReference type="CDD" id="cd17967">
    <property type="entry name" value="DEADc_DDX3_DDX4"/>
    <property type="match status" value="1"/>
</dbReference>
<dbReference type="CDD" id="cd18787">
    <property type="entry name" value="SF2_C_DEAD"/>
    <property type="match status" value="1"/>
</dbReference>
<dbReference type="FunFam" id="3.40.50.300:FF:000008">
    <property type="entry name" value="ATP-dependent RNA helicase RhlB"/>
    <property type="match status" value="1"/>
</dbReference>
<dbReference type="FunFam" id="3.40.50.300:FF:000397">
    <property type="entry name" value="Probable ATP-dependent RNA helicase DDX4"/>
    <property type="match status" value="1"/>
</dbReference>
<dbReference type="Gene3D" id="3.40.50.300">
    <property type="entry name" value="P-loop containing nucleotide triphosphate hydrolases"/>
    <property type="match status" value="2"/>
</dbReference>
<dbReference type="InterPro" id="IPR011545">
    <property type="entry name" value="DEAD/DEAH_box_helicase_dom"/>
</dbReference>
<dbReference type="InterPro" id="IPR044763">
    <property type="entry name" value="Ded1/Dbp1_DEADc"/>
</dbReference>
<dbReference type="InterPro" id="IPR014001">
    <property type="entry name" value="Helicase_ATP-bd"/>
</dbReference>
<dbReference type="InterPro" id="IPR001650">
    <property type="entry name" value="Helicase_C-like"/>
</dbReference>
<dbReference type="InterPro" id="IPR027417">
    <property type="entry name" value="P-loop_NTPase"/>
</dbReference>
<dbReference type="InterPro" id="IPR000629">
    <property type="entry name" value="RNA-helicase_DEAD-box_CS"/>
</dbReference>
<dbReference type="InterPro" id="IPR014014">
    <property type="entry name" value="RNA_helicase_DEAD_Q_motif"/>
</dbReference>
<dbReference type="PANTHER" id="PTHR47958">
    <property type="entry name" value="ATP-DEPENDENT RNA HELICASE DBP3"/>
    <property type="match status" value="1"/>
</dbReference>
<dbReference type="Pfam" id="PF00270">
    <property type="entry name" value="DEAD"/>
    <property type="match status" value="1"/>
</dbReference>
<dbReference type="Pfam" id="PF00271">
    <property type="entry name" value="Helicase_C"/>
    <property type="match status" value="1"/>
</dbReference>
<dbReference type="SMART" id="SM00487">
    <property type="entry name" value="DEXDc"/>
    <property type="match status" value="1"/>
</dbReference>
<dbReference type="SMART" id="SM00490">
    <property type="entry name" value="HELICc"/>
    <property type="match status" value="1"/>
</dbReference>
<dbReference type="SUPFAM" id="SSF52540">
    <property type="entry name" value="P-loop containing nucleoside triphosphate hydrolases"/>
    <property type="match status" value="1"/>
</dbReference>
<dbReference type="PROSITE" id="PS00039">
    <property type="entry name" value="DEAD_ATP_HELICASE"/>
    <property type="match status" value="1"/>
</dbReference>
<dbReference type="PROSITE" id="PS51192">
    <property type="entry name" value="HELICASE_ATP_BIND_1"/>
    <property type="match status" value="1"/>
</dbReference>
<dbReference type="PROSITE" id="PS51194">
    <property type="entry name" value="HELICASE_CTER"/>
    <property type="match status" value="1"/>
</dbReference>
<dbReference type="PROSITE" id="PS51195">
    <property type="entry name" value="Q_MOTIF"/>
    <property type="match status" value="1"/>
</dbReference>